<feature type="chain" id="PRO_1000141676" description="DNA-directed RNA polymerase subunit beta">
    <location>
        <begin position="1"/>
        <end position="1252"/>
    </location>
</feature>
<name>RPOB_CHLTB</name>
<sequence length="1252" mass="140058">MFKCPERVSVKKKEDILDLPNLVEVQIKSYKQFLQIGKLAEERENIGLEEVFREIFPIKSYNEATILEYLSYNLGVPKYSPEECIRRGITYSVTLKVRFRLTDETGIKEEEVYMGTIPIMTDKGTFIINGAERVVVSQVHRSPGINFEQEKHSKGNVLFSFRIIPYRGSWLEAVFDINDLIYIHIDRKKRRRKILAMTFIRALGYSTDADIIEEFFSVEERSLRSEKDFVALVGKVLADNVVDADSSLVYGKAGEKLSTAMLKRILDTGVQSLKIAVGADENHPIIKMLAKDPTDSYEAALKDFYRRLRPGEPATLANARSTIMRLFFDAKRYNLGRVGRYKLNKKLGFPLDDETLSQVTLRKEDVIGALKYLIRLRMGDEKTSIDDIDHLANRRVRSVGELIQNHCRSGLARMEKIVRERMNLFDFSSDTLTPGKIISAKGLVSVLKDFFSRSQLSQFMDQTNPVAELTHKRRLSALGPGGLNRERAGFEVRDVHASHYGRICPIETPEGPNIGLITSLSSFAKINEFGFIETPYRVVRDGIVTDEIEYMTADVEEECVIAQASAELDEYNMFKTPVCWARYKGEAFEADTSTVTHMDVSPKQLVSVVTGLIPFLEHDDANRALMGSNMQRQAVPLLKTEAAIVGTGLEGRAAKDSGAIIVAQEDGVVEYVDSYEIVVAKKNNPTLKDRYQLKKFLRSNSGTCINQTPLCSVGDVVTHGDVLADGPATDKGELALGKNVLVAFMPWYGYNFEDAIIISERLIKQDAYTSIYIEEFELTARDTKLGKEEITRDIPNVSEEVLANLGEDGIVRIGAEVKPGDILVGKITPKSETELAPEERLLRAIFGEKAADVKDASLTVPPGTEGVVMDVKVFSRKDRLSKSDDELVEEAVHLKDLQKEYKSQLAQLKVEHREKLGALLLNEKAPAAIVHRRSADILVQEGAIFDQETIELLERESLVDLLIAPCDMYDVLKDILSSYETAVQRLEVNYKTEAEHIKEGDADLDHGVIRQVKVYVASKRKLQVGDKMAGRHGNKGVVSKIVPEADMPFLANGETVQMILNPLGVPSRMNLGQVLETHLGYAAKTAGIYVKTPVFEGFPESRIWDMMIEQGLPEDGKSYLFDGKTGERFDSKVVVGYIYMLKLSHLIADKIHARSIGPYSLVTQQPLGGKAQMGGQRFGEMEVWALEAYGVAHMLQEILTVKSDDVSGRTRIYESIVKGENLLRSGTPESFNVLIKEMQGLGLDVRPMVVDA</sequence>
<comment type="function">
    <text evidence="1">DNA-dependent RNA polymerase catalyzes the transcription of DNA into RNA using the four ribonucleoside triphosphates as substrates.</text>
</comment>
<comment type="catalytic activity">
    <reaction evidence="1">
        <text>RNA(n) + a ribonucleoside 5'-triphosphate = RNA(n+1) + diphosphate</text>
        <dbReference type="Rhea" id="RHEA:21248"/>
        <dbReference type="Rhea" id="RHEA-COMP:14527"/>
        <dbReference type="Rhea" id="RHEA-COMP:17342"/>
        <dbReference type="ChEBI" id="CHEBI:33019"/>
        <dbReference type="ChEBI" id="CHEBI:61557"/>
        <dbReference type="ChEBI" id="CHEBI:140395"/>
        <dbReference type="EC" id="2.7.7.6"/>
    </reaction>
</comment>
<comment type="subunit">
    <text evidence="1">The RNAP catalytic core consists of 2 alpha, 1 beta, 1 beta' and 1 omega subunit. When a sigma factor is associated with the core the holoenzyme is formed, which can initiate transcription.</text>
</comment>
<comment type="similarity">
    <text evidence="1">Belongs to the RNA polymerase beta chain family.</text>
</comment>
<keyword id="KW-0240">DNA-directed RNA polymerase</keyword>
<keyword id="KW-0548">Nucleotidyltransferase</keyword>
<keyword id="KW-0804">Transcription</keyword>
<keyword id="KW-0808">Transferase</keyword>
<evidence type="ECO:0000255" key="1">
    <source>
        <dbReference type="HAMAP-Rule" id="MF_01321"/>
    </source>
</evidence>
<reference key="1">
    <citation type="journal article" date="2008" name="Genome Res.">
        <title>Chlamydia trachomatis: genome sequence analysis of lymphogranuloma venereum isolates.</title>
        <authorList>
            <person name="Thomson N.R."/>
            <person name="Holden M.T.G."/>
            <person name="Carder C."/>
            <person name="Lennard N."/>
            <person name="Lockey S.J."/>
            <person name="Marsh P."/>
            <person name="Skipp P."/>
            <person name="O'Connor C.D."/>
            <person name="Goodhead I."/>
            <person name="Norbertzcak H."/>
            <person name="Harris B."/>
            <person name="Ormond D."/>
            <person name="Rance R."/>
            <person name="Quail M.A."/>
            <person name="Parkhill J."/>
            <person name="Stephens R.S."/>
            <person name="Clarke I.N."/>
        </authorList>
    </citation>
    <scope>NUCLEOTIDE SEQUENCE [LARGE SCALE GENOMIC DNA]</scope>
    <source>
        <strain>UCH-1/proctitis</strain>
    </source>
</reference>
<gene>
    <name evidence="1" type="primary">rpoB</name>
    <name type="ordered locus">CTLon_0563</name>
</gene>
<dbReference type="EC" id="2.7.7.6" evidence="1"/>
<dbReference type="EMBL" id="AM884177">
    <property type="protein sequence ID" value="CAP06961.1"/>
    <property type="molecule type" value="Genomic_DNA"/>
</dbReference>
<dbReference type="RefSeq" id="WP_012263639.1">
    <property type="nucleotide sequence ID" value="NC_010280.2"/>
</dbReference>
<dbReference type="SMR" id="B0BBU6"/>
<dbReference type="KEGG" id="ctl:CTLon_0563"/>
<dbReference type="HOGENOM" id="CLU_000524_4_1_0"/>
<dbReference type="Proteomes" id="UP001154401">
    <property type="component" value="Chromosome"/>
</dbReference>
<dbReference type="GO" id="GO:0000428">
    <property type="term" value="C:DNA-directed RNA polymerase complex"/>
    <property type="evidence" value="ECO:0007669"/>
    <property type="project" value="UniProtKB-KW"/>
</dbReference>
<dbReference type="GO" id="GO:0003677">
    <property type="term" value="F:DNA binding"/>
    <property type="evidence" value="ECO:0007669"/>
    <property type="project" value="UniProtKB-UniRule"/>
</dbReference>
<dbReference type="GO" id="GO:0003899">
    <property type="term" value="F:DNA-directed RNA polymerase activity"/>
    <property type="evidence" value="ECO:0007669"/>
    <property type="project" value="UniProtKB-UniRule"/>
</dbReference>
<dbReference type="GO" id="GO:0032549">
    <property type="term" value="F:ribonucleoside binding"/>
    <property type="evidence" value="ECO:0007669"/>
    <property type="project" value="InterPro"/>
</dbReference>
<dbReference type="GO" id="GO:0006351">
    <property type="term" value="P:DNA-templated transcription"/>
    <property type="evidence" value="ECO:0007669"/>
    <property type="project" value="UniProtKB-UniRule"/>
</dbReference>
<dbReference type="CDD" id="cd00653">
    <property type="entry name" value="RNA_pol_B_RPB2"/>
    <property type="match status" value="1"/>
</dbReference>
<dbReference type="FunFam" id="3.90.1800.10:FF:000001">
    <property type="entry name" value="DNA-directed RNA polymerase subunit beta"/>
    <property type="match status" value="1"/>
</dbReference>
<dbReference type="Gene3D" id="2.40.50.100">
    <property type="match status" value="1"/>
</dbReference>
<dbReference type="Gene3D" id="2.40.50.150">
    <property type="match status" value="1"/>
</dbReference>
<dbReference type="Gene3D" id="3.90.1100.10">
    <property type="match status" value="1"/>
</dbReference>
<dbReference type="Gene3D" id="2.40.270.10">
    <property type="entry name" value="DNA-directed RNA polymerase, subunit 2, domain 6"/>
    <property type="match status" value="3"/>
</dbReference>
<dbReference type="Gene3D" id="3.90.1800.10">
    <property type="entry name" value="RNA polymerase alpha subunit dimerisation domain"/>
    <property type="match status" value="1"/>
</dbReference>
<dbReference type="Gene3D" id="3.90.1110.10">
    <property type="entry name" value="RNA polymerase Rpb2, domain 2"/>
    <property type="match status" value="1"/>
</dbReference>
<dbReference type="HAMAP" id="MF_01321">
    <property type="entry name" value="RNApol_bact_RpoB"/>
    <property type="match status" value="1"/>
</dbReference>
<dbReference type="InterPro" id="IPR019462">
    <property type="entry name" value="DNA-dir_RNA_pol_bsu_external_1"/>
</dbReference>
<dbReference type="InterPro" id="IPR015712">
    <property type="entry name" value="DNA-dir_RNA_pol_su2"/>
</dbReference>
<dbReference type="InterPro" id="IPR007120">
    <property type="entry name" value="DNA-dir_RNAP_su2_dom"/>
</dbReference>
<dbReference type="InterPro" id="IPR037033">
    <property type="entry name" value="DNA-dir_RNAP_su2_hyb_sf"/>
</dbReference>
<dbReference type="InterPro" id="IPR010243">
    <property type="entry name" value="RNA_pol_bsu_bac"/>
</dbReference>
<dbReference type="InterPro" id="IPR007121">
    <property type="entry name" value="RNA_pol_bsu_CS"/>
</dbReference>
<dbReference type="InterPro" id="IPR007644">
    <property type="entry name" value="RNA_pol_bsu_protrusion"/>
</dbReference>
<dbReference type="InterPro" id="IPR007642">
    <property type="entry name" value="RNA_pol_Rpb2_2"/>
</dbReference>
<dbReference type="InterPro" id="IPR037034">
    <property type="entry name" value="RNA_pol_Rpb2_2_sf"/>
</dbReference>
<dbReference type="InterPro" id="IPR007645">
    <property type="entry name" value="RNA_pol_Rpb2_3"/>
</dbReference>
<dbReference type="InterPro" id="IPR007641">
    <property type="entry name" value="RNA_pol_Rpb2_7"/>
</dbReference>
<dbReference type="InterPro" id="IPR014724">
    <property type="entry name" value="RNA_pol_RPB2_OB-fold"/>
</dbReference>
<dbReference type="NCBIfam" id="NF001616">
    <property type="entry name" value="PRK00405.1"/>
    <property type="match status" value="1"/>
</dbReference>
<dbReference type="NCBIfam" id="TIGR02013">
    <property type="entry name" value="rpoB"/>
    <property type="match status" value="1"/>
</dbReference>
<dbReference type="PANTHER" id="PTHR20856">
    <property type="entry name" value="DNA-DIRECTED RNA POLYMERASE I SUBUNIT 2"/>
    <property type="match status" value="1"/>
</dbReference>
<dbReference type="Pfam" id="PF04563">
    <property type="entry name" value="RNA_pol_Rpb2_1"/>
    <property type="match status" value="1"/>
</dbReference>
<dbReference type="Pfam" id="PF04561">
    <property type="entry name" value="RNA_pol_Rpb2_2"/>
    <property type="match status" value="1"/>
</dbReference>
<dbReference type="Pfam" id="PF04565">
    <property type="entry name" value="RNA_pol_Rpb2_3"/>
    <property type="match status" value="1"/>
</dbReference>
<dbReference type="Pfam" id="PF10385">
    <property type="entry name" value="RNA_pol_Rpb2_45"/>
    <property type="match status" value="1"/>
</dbReference>
<dbReference type="Pfam" id="PF00562">
    <property type="entry name" value="RNA_pol_Rpb2_6"/>
    <property type="match status" value="1"/>
</dbReference>
<dbReference type="Pfam" id="PF04560">
    <property type="entry name" value="RNA_pol_Rpb2_7"/>
    <property type="match status" value="1"/>
</dbReference>
<dbReference type="SUPFAM" id="SSF64484">
    <property type="entry name" value="beta and beta-prime subunits of DNA dependent RNA-polymerase"/>
    <property type="match status" value="1"/>
</dbReference>
<dbReference type="PROSITE" id="PS01166">
    <property type="entry name" value="RNA_POL_BETA"/>
    <property type="match status" value="1"/>
</dbReference>
<organism>
    <name type="scientific">Chlamydia trachomatis serovar L2b (strain UCH-1/proctitis)</name>
    <dbReference type="NCBI Taxonomy" id="471473"/>
    <lineage>
        <taxon>Bacteria</taxon>
        <taxon>Pseudomonadati</taxon>
        <taxon>Chlamydiota</taxon>
        <taxon>Chlamydiia</taxon>
        <taxon>Chlamydiales</taxon>
        <taxon>Chlamydiaceae</taxon>
        <taxon>Chlamydia/Chlamydophila group</taxon>
        <taxon>Chlamydia</taxon>
    </lineage>
</organism>
<accession>B0BBU6</accession>
<protein>
    <recommendedName>
        <fullName evidence="1">DNA-directed RNA polymerase subunit beta</fullName>
        <shortName evidence="1">RNAP subunit beta</shortName>
        <ecNumber evidence="1">2.7.7.6</ecNumber>
    </recommendedName>
    <alternativeName>
        <fullName evidence="1">RNA polymerase subunit beta</fullName>
    </alternativeName>
    <alternativeName>
        <fullName evidence="1">Transcriptase subunit beta</fullName>
    </alternativeName>
</protein>
<proteinExistence type="inferred from homology"/>